<feature type="chain" id="PRO_0000241873" description="Orotidine 5'-phosphate decarboxylase">
    <location>
        <begin position="1"/>
        <end position="229"/>
    </location>
</feature>
<feature type="active site" description="Proton donor" evidence="1">
    <location>
        <position position="61"/>
    </location>
</feature>
<feature type="binding site" evidence="1">
    <location>
        <position position="10"/>
    </location>
    <ligand>
        <name>substrate</name>
    </ligand>
</feature>
<feature type="binding site" evidence="1">
    <location>
        <position position="32"/>
    </location>
    <ligand>
        <name>substrate</name>
    </ligand>
</feature>
<feature type="binding site" evidence="1">
    <location>
        <begin position="59"/>
        <end position="68"/>
    </location>
    <ligand>
        <name>substrate</name>
    </ligand>
</feature>
<feature type="binding site" evidence="1">
    <location>
        <position position="119"/>
    </location>
    <ligand>
        <name>substrate</name>
    </ligand>
</feature>
<feature type="binding site" evidence="1">
    <location>
        <position position="180"/>
    </location>
    <ligand>
        <name>substrate</name>
    </ligand>
</feature>
<feature type="binding site" evidence="1">
    <location>
        <position position="189"/>
    </location>
    <ligand>
        <name>substrate</name>
    </ligand>
</feature>
<feature type="binding site" evidence="1">
    <location>
        <position position="209"/>
    </location>
    <ligand>
        <name>substrate</name>
    </ligand>
</feature>
<feature type="binding site" evidence="1">
    <location>
        <position position="210"/>
    </location>
    <ligand>
        <name>substrate</name>
    </ligand>
</feature>
<sequence length="229" mass="25077">MTPKLIVALDFDNQDNAIQLVEKLDPNHCALKVGSELFTLLGPQFVKALVRREFKVFLDLKFHDIPNTVAKACHSAAELGVWMINVHAIGGLKMLQAARESLKTYGKDRPLLIAVTVLTSFEEGELASVGISNTLPEQATHLAMLAREAGLDGVVSSAHEVKIIKQKCGENFITVTPGIRLPNNLKDDQSRVMTPQQAIREGSDFLVIGRPITQASNPYEVVSALLRDL</sequence>
<comment type="function">
    <text evidence="1">Catalyzes the decarboxylation of orotidine 5'-monophosphate (OMP) to uridine 5'-monophosphate (UMP).</text>
</comment>
<comment type="catalytic activity">
    <reaction evidence="1">
        <text>orotidine 5'-phosphate + H(+) = UMP + CO2</text>
        <dbReference type="Rhea" id="RHEA:11596"/>
        <dbReference type="ChEBI" id="CHEBI:15378"/>
        <dbReference type="ChEBI" id="CHEBI:16526"/>
        <dbReference type="ChEBI" id="CHEBI:57538"/>
        <dbReference type="ChEBI" id="CHEBI:57865"/>
        <dbReference type="EC" id="4.1.1.23"/>
    </reaction>
</comment>
<comment type="pathway">
    <text evidence="1">Pyrimidine metabolism; UMP biosynthesis via de novo pathway; UMP from orotate: step 2/2.</text>
</comment>
<comment type="subunit">
    <text evidence="1">Homodimer.</text>
</comment>
<comment type="similarity">
    <text evidence="1">Belongs to the OMP decarboxylase family. Type 1 subfamily.</text>
</comment>
<evidence type="ECO:0000255" key="1">
    <source>
        <dbReference type="HAMAP-Rule" id="MF_01200"/>
    </source>
</evidence>
<proteinExistence type="inferred from homology"/>
<protein>
    <recommendedName>
        <fullName evidence="1">Orotidine 5'-phosphate decarboxylase</fullName>
        <ecNumber evidence="1">4.1.1.23</ecNumber>
    </recommendedName>
    <alternativeName>
        <fullName evidence="1">OMP decarboxylase</fullName>
        <shortName evidence="1">OMPDCase</shortName>
        <shortName evidence="1">OMPdecase</shortName>
    </alternativeName>
</protein>
<keyword id="KW-0210">Decarboxylase</keyword>
<keyword id="KW-0456">Lyase</keyword>
<keyword id="KW-0665">Pyrimidine biosynthesis</keyword>
<keyword id="KW-1185">Reference proteome</keyword>
<name>PYRF_LEGPH</name>
<reference key="1">
    <citation type="journal article" date="2004" name="Science">
        <title>The genomic sequence of the accidental pathogen Legionella pneumophila.</title>
        <authorList>
            <person name="Chien M."/>
            <person name="Morozova I."/>
            <person name="Shi S."/>
            <person name="Sheng H."/>
            <person name="Chen J."/>
            <person name="Gomez S.M."/>
            <person name="Asamani G."/>
            <person name="Hill K."/>
            <person name="Nuara J."/>
            <person name="Feder M."/>
            <person name="Rineer J."/>
            <person name="Greenberg J.J."/>
            <person name="Steshenko V."/>
            <person name="Park S.H."/>
            <person name="Zhao B."/>
            <person name="Teplitskaya E."/>
            <person name="Edwards J.R."/>
            <person name="Pampou S."/>
            <person name="Georghiou A."/>
            <person name="Chou I.-C."/>
            <person name="Iannuccilli W."/>
            <person name="Ulz M.E."/>
            <person name="Kim D.H."/>
            <person name="Geringer-Sameth A."/>
            <person name="Goldsberry C."/>
            <person name="Morozov P."/>
            <person name="Fischer S.G."/>
            <person name="Segal G."/>
            <person name="Qu X."/>
            <person name="Rzhetsky A."/>
            <person name="Zhang P."/>
            <person name="Cayanis E."/>
            <person name="De Jong P.J."/>
            <person name="Ju J."/>
            <person name="Kalachikov S."/>
            <person name="Shuman H.A."/>
            <person name="Russo J.J."/>
        </authorList>
    </citation>
    <scope>NUCLEOTIDE SEQUENCE [LARGE SCALE GENOMIC DNA]</scope>
    <source>
        <strain>Philadelphia 1 / ATCC 33152 / DSM 7513</strain>
    </source>
</reference>
<organism>
    <name type="scientific">Legionella pneumophila subsp. pneumophila (strain Philadelphia 1 / ATCC 33152 / DSM 7513)</name>
    <dbReference type="NCBI Taxonomy" id="272624"/>
    <lineage>
        <taxon>Bacteria</taxon>
        <taxon>Pseudomonadati</taxon>
        <taxon>Pseudomonadota</taxon>
        <taxon>Gammaproteobacteria</taxon>
        <taxon>Legionellales</taxon>
        <taxon>Legionellaceae</taxon>
        <taxon>Legionella</taxon>
    </lineage>
</organism>
<dbReference type="EC" id="4.1.1.23" evidence="1"/>
<dbReference type="EMBL" id="AE017354">
    <property type="protein sequence ID" value="AAU27507.1"/>
    <property type="molecule type" value="Genomic_DNA"/>
</dbReference>
<dbReference type="RefSeq" id="WP_010947154.1">
    <property type="nucleotide sequence ID" value="NC_002942.5"/>
</dbReference>
<dbReference type="RefSeq" id="YP_095454.1">
    <property type="nucleotide sequence ID" value="NC_002942.5"/>
</dbReference>
<dbReference type="SMR" id="Q5ZVL5"/>
<dbReference type="STRING" id="272624.lpg1425"/>
<dbReference type="PaxDb" id="272624-lpg1425"/>
<dbReference type="GeneID" id="57035415"/>
<dbReference type="KEGG" id="lpn:lpg1425"/>
<dbReference type="PATRIC" id="fig|272624.6.peg.1495"/>
<dbReference type="eggNOG" id="COG0284">
    <property type="taxonomic scope" value="Bacteria"/>
</dbReference>
<dbReference type="HOGENOM" id="CLU_067069_0_0_6"/>
<dbReference type="OrthoDB" id="9806203at2"/>
<dbReference type="UniPathway" id="UPA00070">
    <property type="reaction ID" value="UER00120"/>
</dbReference>
<dbReference type="Proteomes" id="UP000000609">
    <property type="component" value="Chromosome"/>
</dbReference>
<dbReference type="GO" id="GO:0005829">
    <property type="term" value="C:cytosol"/>
    <property type="evidence" value="ECO:0007669"/>
    <property type="project" value="TreeGrafter"/>
</dbReference>
<dbReference type="GO" id="GO:0004590">
    <property type="term" value="F:orotidine-5'-phosphate decarboxylase activity"/>
    <property type="evidence" value="ECO:0007669"/>
    <property type="project" value="UniProtKB-UniRule"/>
</dbReference>
<dbReference type="GO" id="GO:0006207">
    <property type="term" value="P:'de novo' pyrimidine nucleobase biosynthetic process"/>
    <property type="evidence" value="ECO:0007669"/>
    <property type="project" value="InterPro"/>
</dbReference>
<dbReference type="GO" id="GO:0044205">
    <property type="term" value="P:'de novo' UMP biosynthetic process"/>
    <property type="evidence" value="ECO:0007669"/>
    <property type="project" value="UniProtKB-UniRule"/>
</dbReference>
<dbReference type="CDD" id="cd04725">
    <property type="entry name" value="OMP_decarboxylase_like"/>
    <property type="match status" value="1"/>
</dbReference>
<dbReference type="FunFam" id="3.20.20.70:FF:000015">
    <property type="entry name" value="Orotidine 5'-phosphate decarboxylase"/>
    <property type="match status" value="1"/>
</dbReference>
<dbReference type="Gene3D" id="3.20.20.70">
    <property type="entry name" value="Aldolase class I"/>
    <property type="match status" value="1"/>
</dbReference>
<dbReference type="HAMAP" id="MF_01200_B">
    <property type="entry name" value="OMPdecase_type1_B"/>
    <property type="match status" value="1"/>
</dbReference>
<dbReference type="InterPro" id="IPR013785">
    <property type="entry name" value="Aldolase_TIM"/>
</dbReference>
<dbReference type="InterPro" id="IPR014732">
    <property type="entry name" value="OMPdecase"/>
</dbReference>
<dbReference type="InterPro" id="IPR018089">
    <property type="entry name" value="OMPdecase_AS"/>
</dbReference>
<dbReference type="InterPro" id="IPR047596">
    <property type="entry name" value="OMPdecase_bac"/>
</dbReference>
<dbReference type="InterPro" id="IPR001754">
    <property type="entry name" value="OMPdeCOase_dom"/>
</dbReference>
<dbReference type="InterPro" id="IPR011060">
    <property type="entry name" value="RibuloseP-bd_barrel"/>
</dbReference>
<dbReference type="NCBIfam" id="NF001273">
    <property type="entry name" value="PRK00230.1"/>
    <property type="match status" value="1"/>
</dbReference>
<dbReference type="NCBIfam" id="TIGR01740">
    <property type="entry name" value="pyrF"/>
    <property type="match status" value="1"/>
</dbReference>
<dbReference type="PANTHER" id="PTHR32119">
    <property type="entry name" value="OROTIDINE 5'-PHOSPHATE DECARBOXYLASE"/>
    <property type="match status" value="1"/>
</dbReference>
<dbReference type="PANTHER" id="PTHR32119:SF2">
    <property type="entry name" value="OROTIDINE 5'-PHOSPHATE DECARBOXYLASE"/>
    <property type="match status" value="1"/>
</dbReference>
<dbReference type="Pfam" id="PF00215">
    <property type="entry name" value="OMPdecase"/>
    <property type="match status" value="1"/>
</dbReference>
<dbReference type="SMART" id="SM00934">
    <property type="entry name" value="OMPdecase"/>
    <property type="match status" value="1"/>
</dbReference>
<dbReference type="SUPFAM" id="SSF51366">
    <property type="entry name" value="Ribulose-phoshate binding barrel"/>
    <property type="match status" value="1"/>
</dbReference>
<dbReference type="PROSITE" id="PS00156">
    <property type="entry name" value="OMPDECASE"/>
    <property type="match status" value="1"/>
</dbReference>
<accession>Q5ZVL5</accession>
<gene>
    <name evidence="1" type="primary">pyrF</name>
    <name type="ordered locus">lpg1425</name>
</gene>